<name>APT_VIBCM</name>
<feature type="chain" id="PRO_1000116264" description="Adenine phosphoribosyltransferase">
    <location>
        <begin position="1"/>
        <end position="181"/>
    </location>
</feature>
<sequence length="181" mass="19693">MTTETLSLIKSSIKSIPDYPKKGILFRDVTSLLEDAQAYQATIQLLVEKYKDMGFTKVVGTEARGFLFGAPLALELGVGFVPVRKPGKLPRQTVAQSYELEYGTDTLEIHVDAIKPGDKVLVVDDLLATGGTIEATTKLIRQLGGEVEHAAFVINLPEIGGDKRLEGLGLQVYSICEFEGH</sequence>
<gene>
    <name evidence="1" type="primary">apt</name>
    <name type="ordered locus">VCM66_1008</name>
</gene>
<evidence type="ECO:0000255" key="1">
    <source>
        <dbReference type="HAMAP-Rule" id="MF_00004"/>
    </source>
</evidence>
<organism>
    <name type="scientific">Vibrio cholerae serotype O1 (strain M66-2)</name>
    <dbReference type="NCBI Taxonomy" id="579112"/>
    <lineage>
        <taxon>Bacteria</taxon>
        <taxon>Pseudomonadati</taxon>
        <taxon>Pseudomonadota</taxon>
        <taxon>Gammaproteobacteria</taxon>
        <taxon>Vibrionales</taxon>
        <taxon>Vibrionaceae</taxon>
        <taxon>Vibrio</taxon>
    </lineage>
</organism>
<dbReference type="EC" id="2.4.2.7" evidence="1"/>
<dbReference type="EMBL" id="CP001233">
    <property type="protein sequence ID" value="ACP05326.1"/>
    <property type="molecule type" value="Genomic_DNA"/>
</dbReference>
<dbReference type="RefSeq" id="WP_000206218.1">
    <property type="nucleotide sequence ID" value="NC_012578.1"/>
</dbReference>
<dbReference type="SMR" id="C3LTV0"/>
<dbReference type="KEGG" id="vcm:VCM66_1008"/>
<dbReference type="HOGENOM" id="CLU_063339_3_0_6"/>
<dbReference type="UniPathway" id="UPA00588">
    <property type="reaction ID" value="UER00646"/>
</dbReference>
<dbReference type="Proteomes" id="UP000001217">
    <property type="component" value="Chromosome I"/>
</dbReference>
<dbReference type="GO" id="GO:0005737">
    <property type="term" value="C:cytoplasm"/>
    <property type="evidence" value="ECO:0007669"/>
    <property type="project" value="UniProtKB-SubCell"/>
</dbReference>
<dbReference type="GO" id="GO:0002055">
    <property type="term" value="F:adenine binding"/>
    <property type="evidence" value="ECO:0007669"/>
    <property type="project" value="TreeGrafter"/>
</dbReference>
<dbReference type="GO" id="GO:0003999">
    <property type="term" value="F:adenine phosphoribosyltransferase activity"/>
    <property type="evidence" value="ECO:0007669"/>
    <property type="project" value="UniProtKB-UniRule"/>
</dbReference>
<dbReference type="GO" id="GO:0016208">
    <property type="term" value="F:AMP binding"/>
    <property type="evidence" value="ECO:0007669"/>
    <property type="project" value="TreeGrafter"/>
</dbReference>
<dbReference type="GO" id="GO:0006168">
    <property type="term" value="P:adenine salvage"/>
    <property type="evidence" value="ECO:0007669"/>
    <property type="project" value="InterPro"/>
</dbReference>
<dbReference type="GO" id="GO:0044209">
    <property type="term" value="P:AMP salvage"/>
    <property type="evidence" value="ECO:0007669"/>
    <property type="project" value="UniProtKB-UniRule"/>
</dbReference>
<dbReference type="GO" id="GO:0006166">
    <property type="term" value="P:purine ribonucleoside salvage"/>
    <property type="evidence" value="ECO:0007669"/>
    <property type="project" value="UniProtKB-KW"/>
</dbReference>
<dbReference type="CDD" id="cd06223">
    <property type="entry name" value="PRTases_typeI"/>
    <property type="match status" value="1"/>
</dbReference>
<dbReference type="FunFam" id="3.40.50.2020:FF:000004">
    <property type="entry name" value="Adenine phosphoribosyltransferase"/>
    <property type="match status" value="1"/>
</dbReference>
<dbReference type="Gene3D" id="3.40.50.2020">
    <property type="match status" value="1"/>
</dbReference>
<dbReference type="HAMAP" id="MF_00004">
    <property type="entry name" value="Aden_phosphoribosyltr"/>
    <property type="match status" value="1"/>
</dbReference>
<dbReference type="InterPro" id="IPR005764">
    <property type="entry name" value="Ade_phspho_trans"/>
</dbReference>
<dbReference type="InterPro" id="IPR000836">
    <property type="entry name" value="PRibTrfase_dom"/>
</dbReference>
<dbReference type="InterPro" id="IPR029057">
    <property type="entry name" value="PRTase-like"/>
</dbReference>
<dbReference type="InterPro" id="IPR050054">
    <property type="entry name" value="UPRTase/APRTase"/>
</dbReference>
<dbReference type="NCBIfam" id="TIGR01090">
    <property type="entry name" value="apt"/>
    <property type="match status" value="1"/>
</dbReference>
<dbReference type="NCBIfam" id="NF002632">
    <property type="entry name" value="PRK02304.1-1"/>
    <property type="match status" value="1"/>
</dbReference>
<dbReference type="NCBIfam" id="NF002633">
    <property type="entry name" value="PRK02304.1-2"/>
    <property type="match status" value="1"/>
</dbReference>
<dbReference type="NCBIfam" id="NF002634">
    <property type="entry name" value="PRK02304.1-3"/>
    <property type="match status" value="1"/>
</dbReference>
<dbReference type="NCBIfam" id="NF002636">
    <property type="entry name" value="PRK02304.1-5"/>
    <property type="match status" value="1"/>
</dbReference>
<dbReference type="PANTHER" id="PTHR32315">
    <property type="entry name" value="ADENINE PHOSPHORIBOSYLTRANSFERASE"/>
    <property type="match status" value="1"/>
</dbReference>
<dbReference type="PANTHER" id="PTHR32315:SF3">
    <property type="entry name" value="ADENINE PHOSPHORIBOSYLTRANSFERASE"/>
    <property type="match status" value="1"/>
</dbReference>
<dbReference type="Pfam" id="PF00156">
    <property type="entry name" value="Pribosyltran"/>
    <property type="match status" value="1"/>
</dbReference>
<dbReference type="SUPFAM" id="SSF53271">
    <property type="entry name" value="PRTase-like"/>
    <property type="match status" value="1"/>
</dbReference>
<dbReference type="PROSITE" id="PS00103">
    <property type="entry name" value="PUR_PYR_PR_TRANSFER"/>
    <property type="match status" value="1"/>
</dbReference>
<keyword id="KW-0963">Cytoplasm</keyword>
<keyword id="KW-0328">Glycosyltransferase</keyword>
<keyword id="KW-0660">Purine salvage</keyword>
<keyword id="KW-0808">Transferase</keyword>
<reference key="1">
    <citation type="journal article" date="2008" name="PLoS ONE">
        <title>A recalibrated molecular clock and independent origins for the cholera pandemic clones.</title>
        <authorList>
            <person name="Feng L."/>
            <person name="Reeves P.R."/>
            <person name="Lan R."/>
            <person name="Ren Y."/>
            <person name="Gao C."/>
            <person name="Zhou Z."/>
            <person name="Ren Y."/>
            <person name="Cheng J."/>
            <person name="Wang W."/>
            <person name="Wang J."/>
            <person name="Qian W."/>
            <person name="Li D."/>
            <person name="Wang L."/>
        </authorList>
    </citation>
    <scope>NUCLEOTIDE SEQUENCE [LARGE SCALE GENOMIC DNA]</scope>
    <source>
        <strain>M66-2</strain>
    </source>
</reference>
<proteinExistence type="inferred from homology"/>
<accession>C3LTV0</accession>
<comment type="function">
    <text evidence="1">Catalyzes a salvage reaction resulting in the formation of AMP, that is energically less costly than de novo synthesis.</text>
</comment>
<comment type="catalytic activity">
    <reaction evidence="1">
        <text>AMP + diphosphate = 5-phospho-alpha-D-ribose 1-diphosphate + adenine</text>
        <dbReference type="Rhea" id="RHEA:16609"/>
        <dbReference type="ChEBI" id="CHEBI:16708"/>
        <dbReference type="ChEBI" id="CHEBI:33019"/>
        <dbReference type="ChEBI" id="CHEBI:58017"/>
        <dbReference type="ChEBI" id="CHEBI:456215"/>
        <dbReference type="EC" id="2.4.2.7"/>
    </reaction>
</comment>
<comment type="pathway">
    <text evidence="1">Purine metabolism; AMP biosynthesis via salvage pathway; AMP from adenine: step 1/1.</text>
</comment>
<comment type="subunit">
    <text evidence="1">Homodimer.</text>
</comment>
<comment type="subcellular location">
    <subcellularLocation>
        <location evidence="1">Cytoplasm</location>
    </subcellularLocation>
</comment>
<comment type="similarity">
    <text evidence="1">Belongs to the purine/pyrimidine phosphoribosyltransferase family.</text>
</comment>
<protein>
    <recommendedName>
        <fullName evidence="1">Adenine phosphoribosyltransferase</fullName>
        <shortName evidence="1">APRT</shortName>
        <ecNumber evidence="1">2.4.2.7</ecNumber>
    </recommendedName>
</protein>